<comment type="function">
    <text evidence="4">Involved in the biosynthesis of decaprenylphosphoryl arabinose (DPA) a precursor for arabinan synthesis in mycobacterial cell wall biosynthesis (PubMed:18310020). Catalyzes the transfer of a 5-phosphoribosyl residue from phosphoribose diphosphate (PRPP) to decaprenyl phosphate (DP) to form decaprenylphosphoryl-5-phosphoribose (DPPR) (PubMed:18310020).</text>
</comment>
<comment type="catalytic activity">
    <reaction evidence="4">
        <text>trans,octa-cis-decaprenyl phosphate + 5-phospho-alpha-D-ribose 1-diphosphate + H(+) = trans,octa-cis-decaprenylphospho-beta-D-ribofuranose 5-phosphate + diphosphate</text>
        <dbReference type="Rhea" id="RHEA:34067"/>
        <dbReference type="ChEBI" id="CHEBI:15378"/>
        <dbReference type="ChEBI" id="CHEBI:33019"/>
        <dbReference type="ChEBI" id="CHEBI:58017"/>
        <dbReference type="ChEBI" id="CHEBI:65079"/>
        <dbReference type="ChEBI" id="CHEBI:66937"/>
        <dbReference type="EC" id="2.4.2.45"/>
    </reaction>
    <physiologicalReaction direction="left-to-right" evidence="7">
        <dbReference type="Rhea" id="RHEA:34068"/>
    </physiologicalReaction>
</comment>
<comment type="cofactor">
    <cofactor evidence="1">
        <name>Mg(2+)</name>
        <dbReference type="ChEBI" id="CHEBI:18420"/>
    </cofactor>
</comment>
<comment type="pathway">
    <text evidence="7">Cell wall biogenesis; cell wall polysaccharide biosynthesis.</text>
</comment>
<comment type="subcellular location">
    <subcellularLocation>
        <location evidence="4">Cell inner membrane</location>
        <topology evidence="2">Multi-pass membrane protein</topology>
    </subcellularLocation>
</comment>
<comment type="similarity">
    <text evidence="6">Belongs to the UbiA prenyltransferase family. DPPR synthase subfamily.</text>
</comment>
<keyword id="KW-0997">Cell inner membrane</keyword>
<keyword id="KW-1003">Cell membrane</keyword>
<keyword id="KW-0961">Cell wall biogenesis/degradation</keyword>
<keyword id="KW-0460">Magnesium</keyword>
<keyword id="KW-0472">Membrane</keyword>
<keyword id="KW-0479">Metal-binding</keyword>
<keyword id="KW-1185">Reference proteome</keyword>
<keyword id="KW-0808">Transferase</keyword>
<keyword id="KW-0812">Transmembrane</keyword>
<keyword id="KW-1133">Transmembrane helix</keyword>
<proteinExistence type="evidence at protein level"/>
<organism>
    <name type="scientific">Corynebacterium glutamicum (strain ATCC 13032 / DSM 20300 / JCM 1318 / BCRC 11384 / CCUG 27702 / LMG 3730 / NBRC 12168 / NCIMB 10025 / NRRL B-2784 / 534)</name>
    <dbReference type="NCBI Taxonomy" id="196627"/>
    <lineage>
        <taxon>Bacteria</taxon>
        <taxon>Bacillati</taxon>
        <taxon>Actinomycetota</taxon>
        <taxon>Actinomycetes</taxon>
        <taxon>Mycobacteriales</taxon>
        <taxon>Corynebacteriaceae</taxon>
        <taxon>Corynebacterium</taxon>
    </lineage>
</organism>
<sequence>MSEHAAEHHRDTQNFLTSEPHTTAIEDNKKRQPPKNLADGMIKALRPKQWVKNVLVLAAPLAAGADAIFNQRTIIDVAIAFVVFCFGASAIYLVNDARDVEADREHPTKRFRPIAAGVLPVGMAYGMAVALIALSIGLSFLATDGVALACVIGVYIALQLGYCFGWKHMPVIDIALVSSGFMLRAMAGGVAAGIELSQWFLLVAAFGSLFMASGKRYAEILLHERTGAKIRKSLESYTPTYLRFVWTMAATAVVMSYALWGFDLSQHSTDAGPWYQISMVPFTIAILRYAAGVDTGDGGAPDEVALSDKVLQVLALAWVFCIVMAVYIMPMF</sequence>
<dbReference type="EC" id="2.4.2.45" evidence="4"/>
<dbReference type="EMBL" id="BA000036">
    <property type="protein sequence ID" value="BAC00274.1"/>
    <property type="molecule type" value="Genomic_DNA"/>
</dbReference>
<dbReference type="EMBL" id="BX927156">
    <property type="protein sequence ID" value="CAF20904.1"/>
    <property type="molecule type" value="Genomic_DNA"/>
</dbReference>
<dbReference type="RefSeq" id="NP_602071.1">
    <property type="nucleotide sequence ID" value="NC_003450.3"/>
</dbReference>
<dbReference type="RefSeq" id="WP_011015459.1">
    <property type="nucleotide sequence ID" value="NC_006958.1"/>
</dbReference>
<dbReference type="SMR" id="Q8NLQ9"/>
<dbReference type="STRING" id="196627.cg3189"/>
<dbReference type="KEGG" id="cgb:cg3189"/>
<dbReference type="KEGG" id="cgl:Cgl2880"/>
<dbReference type="PATRIC" id="fig|196627.13.peg.2812"/>
<dbReference type="eggNOG" id="COG0382">
    <property type="taxonomic scope" value="Bacteria"/>
</dbReference>
<dbReference type="HOGENOM" id="CLU_029423_0_0_11"/>
<dbReference type="OrthoDB" id="9803632at2"/>
<dbReference type="BioCyc" id="CORYNE:G18NG-12498-MONOMER"/>
<dbReference type="UniPathway" id="UPA00963"/>
<dbReference type="Proteomes" id="UP000000582">
    <property type="component" value="Chromosome"/>
</dbReference>
<dbReference type="Proteomes" id="UP000001009">
    <property type="component" value="Chromosome"/>
</dbReference>
<dbReference type="GO" id="GO:0005886">
    <property type="term" value="C:plasma membrane"/>
    <property type="evidence" value="ECO:0007669"/>
    <property type="project" value="UniProtKB-SubCell"/>
</dbReference>
<dbReference type="GO" id="GO:0046872">
    <property type="term" value="F:metal ion binding"/>
    <property type="evidence" value="ECO:0007669"/>
    <property type="project" value="UniProtKB-KW"/>
</dbReference>
<dbReference type="GO" id="GO:0016765">
    <property type="term" value="F:transferase activity, transferring alkyl or aryl (other than methyl) groups"/>
    <property type="evidence" value="ECO:0007669"/>
    <property type="project" value="InterPro"/>
</dbReference>
<dbReference type="GO" id="GO:0045227">
    <property type="term" value="P:capsule polysaccharide biosynthetic process"/>
    <property type="evidence" value="ECO:0007669"/>
    <property type="project" value="UniProtKB-UniPathway"/>
</dbReference>
<dbReference type="GO" id="GO:0071555">
    <property type="term" value="P:cell wall organization"/>
    <property type="evidence" value="ECO:0007669"/>
    <property type="project" value="UniProtKB-KW"/>
</dbReference>
<dbReference type="CDD" id="cd13963">
    <property type="entry name" value="PT_UbiA_2"/>
    <property type="match status" value="1"/>
</dbReference>
<dbReference type="Gene3D" id="1.10.357.140">
    <property type="entry name" value="UbiA prenyltransferase"/>
    <property type="match status" value="1"/>
</dbReference>
<dbReference type="InterPro" id="IPR000537">
    <property type="entry name" value="UbiA_prenyltransferase"/>
</dbReference>
<dbReference type="InterPro" id="IPR044878">
    <property type="entry name" value="UbiA_sf"/>
</dbReference>
<dbReference type="NCBIfam" id="NF008978">
    <property type="entry name" value="PRK12324.1-4"/>
    <property type="match status" value="1"/>
</dbReference>
<dbReference type="Pfam" id="PF01040">
    <property type="entry name" value="UbiA"/>
    <property type="match status" value="1"/>
</dbReference>
<accession>Q8NLQ9</accession>
<accession>Q6M1Y0</accession>
<protein>
    <recommendedName>
        <fullName evidence="6">Decaprenyl-phosphate phosphoribosyltransferase</fullName>
        <ecNumber evidence="4">2.4.2.45</ecNumber>
    </recommendedName>
    <alternativeName>
        <fullName evidence="5">5-phospho-alpha-D-ribose-1-diphosphate:decaprenyl-phosphate 5-phosphoribosyltransferase</fullName>
    </alternativeName>
    <alternativeName>
        <fullName evidence="5">DPPR synthase</fullName>
    </alternativeName>
</protein>
<evidence type="ECO:0000250" key="1">
    <source>
        <dbReference type="UniProtKB" id="P9WFR5"/>
    </source>
</evidence>
<evidence type="ECO:0000255" key="2"/>
<evidence type="ECO:0000256" key="3">
    <source>
        <dbReference type="SAM" id="MobiDB-lite"/>
    </source>
</evidence>
<evidence type="ECO:0000269" key="4">
    <source>
    </source>
</evidence>
<evidence type="ECO:0000303" key="5">
    <source>
    </source>
</evidence>
<evidence type="ECO:0000305" key="6"/>
<evidence type="ECO:0000305" key="7">
    <source>
    </source>
</evidence>
<gene>
    <name type="ordered locus">cg3189</name>
    <name type="ordered locus">Cgl2880</name>
</gene>
<reference key="1">
    <citation type="journal article" date="2003" name="Appl. Microbiol. Biotechnol.">
        <title>The Corynebacterium glutamicum genome: features and impacts on biotechnological processes.</title>
        <authorList>
            <person name="Ikeda M."/>
            <person name="Nakagawa S."/>
        </authorList>
    </citation>
    <scope>NUCLEOTIDE SEQUENCE [LARGE SCALE GENOMIC DNA]</scope>
    <source>
        <strain>ATCC 13032 / DSM 20300 / JCM 1318 / BCRC 11384 / CCUG 27702 / LMG 3730 / NBRC 12168 / NCIMB 10025 / NRRL B-2784 / 534</strain>
    </source>
</reference>
<reference key="2">
    <citation type="journal article" date="2003" name="J. Biotechnol.">
        <title>The complete Corynebacterium glutamicum ATCC 13032 genome sequence and its impact on the production of L-aspartate-derived amino acids and vitamins.</title>
        <authorList>
            <person name="Kalinowski J."/>
            <person name="Bathe B."/>
            <person name="Bartels D."/>
            <person name="Bischoff N."/>
            <person name="Bott M."/>
            <person name="Burkovski A."/>
            <person name="Dusch N."/>
            <person name="Eggeling L."/>
            <person name="Eikmanns B.J."/>
            <person name="Gaigalat L."/>
            <person name="Goesmann A."/>
            <person name="Hartmann M."/>
            <person name="Huthmacher K."/>
            <person name="Kraemer R."/>
            <person name="Linke B."/>
            <person name="McHardy A.C."/>
            <person name="Meyer F."/>
            <person name="Moeckel B."/>
            <person name="Pfefferle W."/>
            <person name="Puehler A."/>
            <person name="Rey D.A."/>
            <person name="Rueckert C."/>
            <person name="Rupp O."/>
            <person name="Sahm H."/>
            <person name="Wendisch V.F."/>
            <person name="Wiegraebe I."/>
            <person name="Tauch A."/>
        </authorList>
    </citation>
    <scope>NUCLEOTIDE SEQUENCE [LARGE SCALE GENOMIC DNA]</scope>
    <source>
        <strain>ATCC 13032 / DSM 20300 / JCM 1318 / BCRC 11384 / CCUG 27702 / LMG 3730 / NBRC 12168 / NCIMB 10025 / NRRL B-2784 / 534</strain>
    </source>
</reference>
<reference key="3">
    <citation type="journal article" date="2008" name="Microbiology">
        <title>Identification of amino acids and domains required for catalytic activity of DPPR synthase, a cell wall biosynthetic enzyme of Mycobacterium tuberculosis.</title>
        <authorList>
            <person name="Huang H."/>
            <person name="Berg S."/>
            <person name="Spencer J.S."/>
            <person name="Vereecke D."/>
            <person name="D'Haeze W."/>
            <person name="Holsters M."/>
            <person name="McNeil M.R."/>
        </authorList>
    </citation>
    <scope>FUNCTION</scope>
    <scope>CATALYTIC ACTIVITY</scope>
    <scope>SUBCELLULAR LOCATION</scope>
</reference>
<feature type="chain" id="PRO_0000420586" description="Decaprenyl-phosphate phosphoribosyltransferase">
    <location>
        <begin position="1"/>
        <end position="332"/>
    </location>
</feature>
<feature type="transmembrane region" description="Helical" evidence="2">
    <location>
        <begin position="50"/>
        <end position="70"/>
    </location>
</feature>
<feature type="transmembrane region" description="Helical" evidence="2">
    <location>
        <begin position="74"/>
        <end position="94"/>
    </location>
</feature>
<feature type="transmembrane region" description="Helical" evidence="2">
    <location>
        <begin position="114"/>
        <end position="134"/>
    </location>
</feature>
<feature type="transmembrane region" description="Helical" evidence="2">
    <location>
        <begin position="146"/>
        <end position="166"/>
    </location>
</feature>
<feature type="transmembrane region" description="Helical" evidence="2">
    <location>
        <begin position="169"/>
        <end position="189"/>
    </location>
</feature>
<feature type="transmembrane region" description="Helical" evidence="2">
    <location>
        <begin position="190"/>
        <end position="210"/>
    </location>
</feature>
<feature type="transmembrane region" description="Helical" evidence="2">
    <location>
        <begin position="244"/>
        <end position="264"/>
    </location>
</feature>
<feature type="transmembrane region" description="Helical" evidence="2">
    <location>
        <begin position="273"/>
        <end position="293"/>
    </location>
</feature>
<feature type="transmembrane region" description="Helical" evidence="2">
    <location>
        <begin position="310"/>
        <end position="330"/>
    </location>
</feature>
<feature type="region of interest" description="Disordered" evidence="3">
    <location>
        <begin position="1"/>
        <end position="36"/>
    </location>
</feature>
<feature type="compositionally biased region" description="Basic and acidic residues" evidence="3">
    <location>
        <begin position="1"/>
        <end position="12"/>
    </location>
</feature>
<feature type="binding site" evidence="1">
    <location>
        <position position="52"/>
    </location>
    <ligand>
        <name>5-phospho-alpha-D-ribose 1-diphosphate</name>
        <dbReference type="ChEBI" id="CHEBI:58017"/>
    </ligand>
</feature>
<feature type="binding site" evidence="1">
    <location>
        <position position="92"/>
    </location>
    <ligand>
        <name>5-phospho-alpha-D-ribose 1-diphosphate</name>
        <dbReference type="ChEBI" id="CHEBI:58017"/>
    </ligand>
</feature>
<feature type="binding site" evidence="1">
    <location>
        <position position="95"/>
    </location>
    <ligand>
        <name>Mg(2+)</name>
        <dbReference type="ChEBI" id="CHEBI:18420"/>
    </ligand>
</feature>
<feature type="binding site" evidence="1">
    <location>
        <position position="99"/>
    </location>
    <ligand>
        <name>Mg(2+)</name>
        <dbReference type="ChEBI" id="CHEBI:18420"/>
    </ligand>
</feature>
<feature type="binding site" evidence="1">
    <location>
        <position position="109"/>
    </location>
    <ligand>
        <name>5-phospho-alpha-D-ribose 1-diphosphate</name>
        <dbReference type="ChEBI" id="CHEBI:58017"/>
    </ligand>
</feature>
<feature type="binding site" evidence="1">
    <location>
        <position position="167"/>
    </location>
    <ligand>
        <name>5-phospho-alpha-D-ribose 1-diphosphate</name>
        <dbReference type="ChEBI" id="CHEBI:58017"/>
    </ligand>
</feature>
<feature type="binding site" evidence="1">
    <location>
        <position position="184"/>
    </location>
    <ligand>
        <name>5-phospho-alpha-D-ribose 1-diphosphate</name>
        <dbReference type="ChEBI" id="CHEBI:58017"/>
    </ligand>
</feature>
<feature type="binding site" evidence="1">
    <location>
        <position position="215"/>
    </location>
    <ligand>
        <name>trans,octa-cis-decaprenyl phosphate</name>
        <dbReference type="ChEBI" id="CHEBI:65079"/>
    </ligand>
</feature>
<name>DPPRS_CORGL</name>